<accession>Q3ZCH6</accession>
<dbReference type="EMBL" id="BC102236">
    <property type="protein sequence ID" value="AAI02237.1"/>
    <property type="molecule type" value="mRNA"/>
</dbReference>
<dbReference type="RefSeq" id="NP_001029514.1">
    <property type="nucleotide sequence ID" value="NM_001034342.2"/>
</dbReference>
<dbReference type="SMR" id="Q3ZCH6"/>
<dbReference type="FunCoup" id="Q3ZCH6">
    <property type="interactions" value="1067"/>
</dbReference>
<dbReference type="STRING" id="9913.ENSBTAP00000023213"/>
<dbReference type="PaxDb" id="9913-ENSBTAP00000023213"/>
<dbReference type="GeneID" id="509107"/>
<dbReference type="KEGG" id="bta:509107"/>
<dbReference type="CTD" id="468"/>
<dbReference type="eggNOG" id="KOG4571">
    <property type="taxonomic scope" value="Eukaryota"/>
</dbReference>
<dbReference type="InParanoid" id="Q3ZCH6"/>
<dbReference type="OrthoDB" id="5847285at2759"/>
<dbReference type="Proteomes" id="UP000009136">
    <property type="component" value="Unplaced"/>
</dbReference>
<dbReference type="GO" id="GO:1990590">
    <property type="term" value="C:ATF1-ATF4 transcription factor complex"/>
    <property type="evidence" value="ECO:0000318"/>
    <property type="project" value="GO_Central"/>
</dbReference>
<dbReference type="GO" id="GO:1990589">
    <property type="term" value="C:ATF4-CREB1 transcription factor complex"/>
    <property type="evidence" value="ECO:0000318"/>
    <property type="project" value="GO_Central"/>
</dbReference>
<dbReference type="GO" id="GO:0005813">
    <property type="term" value="C:centrosome"/>
    <property type="evidence" value="ECO:0007669"/>
    <property type="project" value="UniProtKB-SubCell"/>
</dbReference>
<dbReference type="GO" id="GO:0005737">
    <property type="term" value="C:cytoplasm"/>
    <property type="evidence" value="ECO:0000250"/>
    <property type="project" value="UniProtKB"/>
</dbReference>
<dbReference type="GO" id="GO:0016607">
    <property type="term" value="C:nuclear speck"/>
    <property type="evidence" value="ECO:0007669"/>
    <property type="project" value="UniProtKB-SubCell"/>
</dbReference>
<dbReference type="GO" id="GO:0005634">
    <property type="term" value="C:nucleus"/>
    <property type="evidence" value="ECO:0000250"/>
    <property type="project" value="UniProtKB"/>
</dbReference>
<dbReference type="GO" id="GO:0005886">
    <property type="term" value="C:plasma membrane"/>
    <property type="evidence" value="ECO:0007669"/>
    <property type="project" value="UniProtKB-SubCell"/>
</dbReference>
<dbReference type="GO" id="GO:0008140">
    <property type="term" value="F:cAMP response element binding protein binding"/>
    <property type="evidence" value="ECO:0000250"/>
    <property type="project" value="UniProtKB"/>
</dbReference>
<dbReference type="GO" id="GO:0003677">
    <property type="term" value="F:DNA binding"/>
    <property type="evidence" value="ECO:0000250"/>
    <property type="project" value="UniProtKB"/>
</dbReference>
<dbReference type="GO" id="GO:0001228">
    <property type="term" value="F:DNA-binding transcription activator activity, RNA polymerase II-specific"/>
    <property type="evidence" value="ECO:0000318"/>
    <property type="project" value="GO_Central"/>
</dbReference>
<dbReference type="GO" id="GO:0003700">
    <property type="term" value="F:DNA-binding transcription factor activity"/>
    <property type="evidence" value="ECO:0000250"/>
    <property type="project" value="UniProtKB"/>
</dbReference>
<dbReference type="GO" id="GO:0046982">
    <property type="term" value="F:protein heterodimerization activity"/>
    <property type="evidence" value="ECO:0000250"/>
    <property type="project" value="UniProtKB"/>
</dbReference>
<dbReference type="GO" id="GO:0000978">
    <property type="term" value="F:RNA polymerase II cis-regulatory region sequence-specific DNA binding"/>
    <property type="evidence" value="ECO:0000250"/>
    <property type="project" value="UniProtKB"/>
</dbReference>
<dbReference type="GO" id="GO:0000977">
    <property type="term" value="F:RNA polymerase II transcription regulatory region sequence-specific DNA binding"/>
    <property type="evidence" value="ECO:0000318"/>
    <property type="project" value="GO_Central"/>
</dbReference>
<dbReference type="GO" id="GO:0030282">
    <property type="term" value="P:bone mineralization"/>
    <property type="evidence" value="ECO:0000250"/>
    <property type="project" value="UniProtKB"/>
</dbReference>
<dbReference type="GO" id="GO:0034198">
    <property type="term" value="P:cellular response to amino acid starvation"/>
    <property type="evidence" value="ECO:0000250"/>
    <property type="project" value="UniProtKB"/>
</dbReference>
<dbReference type="GO" id="GO:0034599">
    <property type="term" value="P:cellular response to oxidative stress"/>
    <property type="evidence" value="ECO:0000250"/>
    <property type="project" value="UniProtKB"/>
</dbReference>
<dbReference type="GO" id="GO:0032922">
    <property type="term" value="P:circadian regulation of gene expression"/>
    <property type="evidence" value="ECO:0000250"/>
    <property type="project" value="UniProtKB"/>
</dbReference>
<dbReference type="GO" id="GO:0035162">
    <property type="term" value="P:embryonic hemopoiesis"/>
    <property type="evidence" value="ECO:0000250"/>
    <property type="project" value="UniProtKB"/>
</dbReference>
<dbReference type="GO" id="GO:0030968">
    <property type="term" value="P:endoplasmic reticulum unfolded protein response"/>
    <property type="evidence" value="ECO:0000250"/>
    <property type="project" value="UniProtKB"/>
</dbReference>
<dbReference type="GO" id="GO:0140468">
    <property type="term" value="P:HRI-mediated signaling"/>
    <property type="evidence" value="ECO:0000250"/>
    <property type="project" value="UniProtKB"/>
</dbReference>
<dbReference type="GO" id="GO:0140467">
    <property type="term" value="P:integrated stress response signaling"/>
    <property type="evidence" value="ECO:0000250"/>
    <property type="project" value="UniProtKB"/>
</dbReference>
<dbReference type="GO" id="GO:0070059">
    <property type="term" value="P:intrinsic apoptotic signaling pathway in response to endoplasmic reticulum stress"/>
    <property type="evidence" value="ECO:0000250"/>
    <property type="project" value="UniProtKB"/>
</dbReference>
<dbReference type="GO" id="GO:0070309">
    <property type="term" value="P:lens fiber cell morphogenesis"/>
    <property type="evidence" value="ECO:0000250"/>
    <property type="project" value="UniProtKB"/>
</dbReference>
<dbReference type="GO" id="GO:0042789">
    <property type="term" value="P:mRNA transcription by RNA polymerase II"/>
    <property type="evidence" value="ECO:0000250"/>
    <property type="project" value="UniProtKB"/>
</dbReference>
<dbReference type="GO" id="GO:0000122">
    <property type="term" value="P:negative regulation of transcription by RNA polymerase II"/>
    <property type="evidence" value="ECO:0000250"/>
    <property type="project" value="UniProtKB"/>
</dbReference>
<dbReference type="GO" id="GO:0036499">
    <property type="term" value="P:PERK-mediated unfolded protein response"/>
    <property type="evidence" value="ECO:0000250"/>
    <property type="project" value="UniProtKB"/>
</dbReference>
<dbReference type="GO" id="GO:0045893">
    <property type="term" value="P:positive regulation of DNA-templated transcription"/>
    <property type="evidence" value="ECO:0000250"/>
    <property type="project" value="UniProtKB"/>
</dbReference>
<dbReference type="GO" id="GO:0043525">
    <property type="term" value="P:positive regulation of neuron apoptotic process"/>
    <property type="evidence" value="ECO:0000250"/>
    <property type="project" value="UniProtKB"/>
</dbReference>
<dbReference type="GO" id="GO:0045944">
    <property type="term" value="P:positive regulation of transcription by RNA polymerase II"/>
    <property type="evidence" value="ECO:0000250"/>
    <property type="project" value="UniProtKB"/>
</dbReference>
<dbReference type="GO" id="GO:0006355">
    <property type="term" value="P:regulation of DNA-templated transcription"/>
    <property type="evidence" value="ECO:0000250"/>
    <property type="project" value="UniProtKB"/>
</dbReference>
<dbReference type="GO" id="GO:0045667">
    <property type="term" value="P:regulation of osteoblast differentiation"/>
    <property type="evidence" value="ECO:0000250"/>
    <property type="project" value="UniProtKB"/>
</dbReference>
<dbReference type="GO" id="GO:0048167">
    <property type="term" value="P:regulation of synaptic plasticity"/>
    <property type="evidence" value="ECO:0000250"/>
    <property type="project" value="UniProtKB"/>
</dbReference>
<dbReference type="GO" id="GO:0006357">
    <property type="term" value="P:regulation of transcription by RNA polymerase II"/>
    <property type="evidence" value="ECO:0000318"/>
    <property type="project" value="GO_Central"/>
</dbReference>
<dbReference type="GO" id="GO:0034976">
    <property type="term" value="P:response to endoplasmic reticulum stress"/>
    <property type="evidence" value="ECO:0000250"/>
    <property type="project" value="UniProtKB"/>
</dbReference>
<dbReference type="CDD" id="cd14692">
    <property type="entry name" value="bZIP_ATF4"/>
    <property type="match status" value="1"/>
</dbReference>
<dbReference type="FunFam" id="1.20.5.170:FF:000021">
    <property type="entry name" value="Cyclic AMP-dependent transcription factor ATF-4"/>
    <property type="match status" value="1"/>
</dbReference>
<dbReference type="Gene3D" id="1.20.5.170">
    <property type="match status" value="1"/>
</dbReference>
<dbReference type="InterPro" id="IPR004827">
    <property type="entry name" value="bZIP"/>
</dbReference>
<dbReference type="InterPro" id="IPR046347">
    <property type="entry name" value="bZIP_sf"/>
</dbReference>
<dbReference type="PANTHER" id="PTHR13044">
    <property type="entry name" value="ACTIVATING TRANSCRIPTION FACTOR ATF 4/5"/>
    <property type="match status" value="1"/>
</dbReference>
<dbReference type="PANTHER" id="PTHR13044:SF2">
    <property type="entry name" value="CYCLIC AMP-DEPENDENT TRANSCRIPTION FACTOR ATF-4"/>
    <property type="match status" value="1"/>
</dbReference>
<dbReference type="Pfam" id="PF00170">
    <property type="entry name" value="bZIP_1"/>
    <property type="match status" value="1"/>
</dbReference>
<dbReference type="SMART" id="SM00338">
    <property type="entry name" value="BRLZ"/>
    <property type="match status" value="1"/>
</dbReference>
<dbReference type="SUPFAM" id="SSF57959">
    <property type="entry name" value="Leucine zipper domain"/>
    <property type="match status" value="1"/>
</dbReference>
<dbReference type="PROSITE" id="PS50217">
    <property type="entry name" value="BZIP"/>
    <property type="match status" value="1"/>
</dbReference>
<dbReference type="PROSITE" id="PS00036">
    <property type="entry name" value="BZIP_BASIC"/>
    <property type="match status" value="1"/>
</dbReference>
<evidence type="ECO:0000250" key="1">
    <source>
        <dbReference type="UniProtKB" id="P18848"/>
    </source>
</evidence>
<evidence type="ECO:0000250" key="2">
    <source>
        <dbReference type="UniProtKB" id="Q06507"/>
    </source>
</evidence>
<evidence type="ECO:0000250" key="3">
    <source>
        <dbReference type="UniProtKB" id="Q9ES19"/>
    </source>
</evidence>
<evidence type="ECO:0000255" key="4">
    <source>
        <dbReference type="PROSITE-ProRule" id="PRU00978"/>
    </source>
</evidence>
<evidence type="ECO:0000256" key="5">
    <source>
        <dbReference type="SAM" id="MobiDB-lite"/>
    </source>
</evidence>
<evidence type="ECO:0000269" key="6">
    <source>
    </source>
</evidence>
<evidence type="ECO:0000303" key="7">
    <source>
    </source>
</evidence>
<evidence type="ECO:0000305" key="8"/>
<evidence type="ECO:0000312" key="9">
    <source>
        <dbReference type="EMBL" id="AAI02237.1"/>
    </source>
</evidence>
<comment type="function">
    <text evidence="1 2">Transcription factor that binds the cAMP response element (CRE) (consensus: 5'-GTGACGT[AC][AG]-3') and displays two biological functions, as regulator of metabolic and redox processes under normal cellular conditions, and as master transcription factor during integrated stress response (ISR) (By similarity). Binds to asymmetric CRE's as a heterodimer and to palindromic CRE's as a homodimer (By similarity). Core effector of the ISR, which is required for adaptation to various stress such as endoplasmic reticulum (ER) stress, amino acid starvation, mitochondrial stress or oxidative stress. During ISR, ATF4 translation is induced via an alternative ribosome translation re-initiation mechanism in response to EIF2S1/eIF-2-alpha phosphorylation, and stress-induced ATF4 acts as a master transcription factor of stress-responsive genes in order to promote cell recovery (By similarity). Promotes the transcription of genes linked to amino acid sufficiency and resistance to oxidative stress to protect cells against metabolic consequences of ER oxidation (By similarity). Activates the transcription of NLRP1, possibly in concert with other factors in response to ER stress. Activates the transcription of asparagine synthetase (ASNS) in response to amino acid deprivation or ER stress. However, when associated with DDIT3/CHOP, the transcriptional activation of the ASNS gene is inhibited in response to amino acid deprivation (By similarity). Together with DDIT3/CHOP, mediates programmed cell death by promoting the expression of genes involved in cellular amino acid metabolic processes, mRNA translation and the terminal unfolded protein response (terminal UPR), a cellular response that elicits programmed cell death when ER stress is prolonged and unresolved (By similarity). Activates the expression of COX7A2L/SCAF1 downstream of the EIF2AK3/PERK-mediated unfolded protein response, thereby promoting formation of respiratory chain supercomplexes and increasing mitochondrial oxidative phosphorylation (By similarity). Together with DDIT3/CHOP, activates the transcription of the IRS-regulator TRIB3 and promotes ER stress-induced neuronal cell death by regulating the expression of BBC3/PUMA in response to ER stress. May cooperate with the UPR transcriptional regulator QRICH1 to regulate ER protein homeostasis which is critical for cell viability in response to ER stress (By similarity). In the absence of stress, ATF4 translation is at low levels and it is required for normal metabolic processes such as embryonic lens formation, fetal liver hematopoiesis, bone development and synaptic plasticity (By similarity). Acts as a regulator of osteoblast differentiation in response to phosphorylation by RPS6KA3/RSK2: phosphorylation in osteoblasts enhances transactivation activity and promotes expression of osteoblast-specific genes and post-transcriptionally regulates the synthesis of Type I collagen, the main constituent of the bone matrix (By similarity). Cooperates with FOXO1 in osteoblasts to regulate glucose homeostasis through suppression of beta-cell production and decrease in insulin production. Activates transcription of SIRT4. Regulates the circadian expression of the core clock component PER2 and the serotonin transporter SLC6A4. Binds in a circadian time-dependent manner to the cAMP response elements (CRE) in the SLC6A4 and PER2 promoters and periodically activates the transcription of these genes. Mainly acts as a transcriptional activator in cellular stress adaptation, but it can also act as a transcriptional repressor: acts as a regulator of synaptic plasticity by repressing transcription, thereby inhibiting induction and maintenance of long-term memory (By similarity). Regulates synaptic functions via interaction with DISC1 in neurons, which inhibits ATF4 transcription factor activity by disrupting ATF4 dimerization and DNA-binding (By similarity).</text>
</comment>
<comment type="subunit">
    <text evidence="1 2 3 6">Binds DNA as a homodimer and as a heterodimer. Heterodimer; heterodimerizes with CEBPB. Heterodimer; heterodimerizes with DDIT3/CHOP. Interacts with CEP290 (via an N-terminal region) (PubMed:16682973). Interacts with NEK6, DAPK2 (isoform 2) and ZIPK/DAPK3 (By similarity). Interacts (via its leucine zipper domain) with GABBR1 and GABBR2 (via their C-termini) (By similarity). Forms a heterodimer with TXLNG in osteoblasts (By similarity). Interacts (via its DNA binding domain) with FOXO1 (C-terminal half); the interaction occurs in osteoblasts and regulates glucose homeostasis through suppression of beta-cell proliferation and a decrease in insulin production. Interacts with SATB2; the interaction results in enhanced DNA binding and transactivation by these transcription factors (By similarity). Interacts with ABRAXAS2 (By similarity). Interacts with TRIB3, inhibiting the transactivation activity of ATF4. Interacts with DISC1; which inhibits ATF4 transcription factor activity by disrupting ATF4 dimerization and DNA-binding (By similarity). Interacts with EP300/p300; EP300/p300 stabilizes ATF4 and increases its transcriptional activity independently of its catalytic activity by preventing its ubiquitination (By similarity).</text>
</comment>
<comment type="subcellular location">
    <subcellularLocation>
        <location evidence="1">Nucleus</location>
    </subcellularLocation>
    <subcellularLocation>
        <location evidence="1">Nucleus speckle</location>
    </subcellularLocation>
    <subcellularLocation>
        <location evidence="3">Cytoplasm</location>
    </subcellularLocation>
    <subcellularLocation>
        <location evidence="3">Cell membrane</location>
    </subcellularLocation>
    <subcellularLocation>
        <location evidence="1">Cytoplasm</location>
        <location evidence="1">Cytoskeleton</location>
        <location evidence="1">Microtubule organizing center</location>
        <location evidence="1">Centrosome</location>
    </subcellularLocation>
    <text evidence="1 3">Colocalizes with GABBR1 in hippocampal neuron dendritic membranes (By similarity). Colocalizes with NEK6 at the centrosome. Recruited to nuclear speckles following interaction with EP300/p300 (By similarity).</text>
</comment>
<comment type="domain">
    <text evidence="1">The BetaTrCP degron motif promotes binding to BTRC when phosphorylated.</text>
</comment>
<comment type="PTM">
    <text evidence="1">Ubiquitinated by SCF(BTRC) in response to mTORC1 signal, followed by proteasomal degradation and leading to down-regulate expression of SIRT4. Interaction with EP300/p300 inhibits ubiquitination by SCF(BTRC).</text>
</comment>
<comment type="PTM">
    <text evidence="1 2">Phosphorylation at Ser-242 by RPS6KA3/RSK2 in osteoblasts enhances transactivation activity and promotes osteoblast differentiation (By similarity). Phosphorylated on the betaTrCP degron motif at Ser-215, followed by phosphorylation at Ser-220, Ser-227, Ser-231 and Ser-245, promoting interaction with BTRC and ubiquitination. Phosphorylation is promoted by mTORC1 (By similarity). Phosphorylation at Ser-211 by CK2 decreases its stability. Phosphorylated by NEK6 (By similarity).</text>
</comment>
<comment type="PTM">
    <text evidence="1">Hydroxylated by PHD3, leading to decreased protein stability.</text>
</comment>
<comment type="similarity">
    <text evidence="8">Belongs to the bZIP family.</text>
</comment>
<protein>
    <recommendedName>
        <fullName evidence="8">Cyclic AMP-dependent transcription factor ATF-4</fullName>
        <shortName evidence="8">cAMP-dependent transcription factor ATF-4</shortName>
    </recommendedName>
    <alternativeName>
        <fullName evidence="7">Activating transcription factor 4</fullName>
    </alternativeName>
</protein>
<reference key="1">
    <citation type="submission" date="2005-08" db="EMBL/GenBank/DDBJ databases">
        <authorList>
            <consortium name="NIH - Mammalian Gene Collection (MGC) project"/>
        </authorList>
    </citation>
    <scope>NUCLEOTIDE SEQUENCE [LARGE SCALE MRNA]</scope>
    <source>
        <strain evidence="9">Hereford</strain>
        <tissue evidence="9">Mammary gland</tissue>
    </source>
</reference>
<reference key="2">
    <citation type="journal article" date="2006" name="Nat. Genet.">
        <title>The centrosomal protein nephrocystin-6 is mutated in Joubert syndrome and activates transcription factor ATF4.</title>
        <authorList>
            <person name="Sayer J.A."/>
            <person name="Otto E.A."/>
            <person name="O'toole J.F."/>
            <person name="Nurnberg G."/>
            <person name="Kennedy M.A."/>
            <person name="Becker C."/>
            <person name="Hennies H.C."/>
            <person name="Helou J."/>
            <person name="Attanasio M."/>
            <person name="Fausett B.V."/>
            <person name="Utsch B."/>
            <person name="Khanna H."/>
            <person name="Liu Y."/>
            <person name="Drummond I."/>
            <person name="Kawakami I."/>
            <person name="Kusakabe T."/>
            <person name="Tsuda M."/>
            <person name="Ma L."/>
            <person name="Lee H."/>
            <person name="Larson R.G."/>
            <person name="Allen S.J."/>
            <person name="Wilkinson C.J."/>
            <person name="Nigg E.A."/>
            <person name="Shou C."/>
            <person name="Lillo C."/>
            <person name="Williams D.S."/>
            <person name="Hoppe B."/>
            <person name="Kemper M.J."/>
            <person name="Neuhaus T."/>
            <person name="Parisi M.A."/>
            <person name="Glass I.A."/>
            <person name="Petry M."/>
            <person name="Kispert A."/>
            <person name="Gloy J."/>
            <person name="Ganner A."/>
            <person name="Walz G."/>
            <person name="Zhu X."/>
            <person name="Goldman D."/>
            <person name="Nurnberg P."/>
            <person name="Swaroop A."/>
            <person name="Leroux M.R."/>
            <person name="Hildebrandt F."/>
        </authorList>
    </citation>
    <scope>INTERACTION WITH CEP290</scope>
</reference>
<feature type="chain" id="PRO_0000258021" description="Cyclic AMP-dependent transcription factor ATF-4">
    <location>
        <begin position="1"/>
        <end position="348"/>
    </location>
</feature>
<feature type="domain" description="bZIP" evidence="4">
    <location>
        <begin position="275"/>
        <end position="338"/>
    </location>
</feature>
<feature type="region of interest" description="Disordered" evidence="5">
    <location>
        <begin position="151"/>
        <end position="174"/>
    </location>
</feature>
<feature type="region of interest" description="Disordered" evidence="5">
    <location>
        <begin position="187"/>
        <end position="265"/>
    </location>
</feature>
<feature type="region of interest" description="Basic motif" evidence="4">
    <location>
        <begin position="277"/>
        <end position="297"/>
    </location>
</feature>
<feature type="region of interest" description="Interaction with GABBR1" evidence="3">
    <location>
        <begin position="302"/>
        <end position="338"/>
    </location>
</feature>
<feature type="region of interest" description="Leucine-zipper" evidence="4">
    <location>
        <begin position="303"/>
        <end position="331"/>
    </location>
</feature>
<feature type="short sequence motif" description="BetaTrCP degron motif" evidence="1">
    <location>
        <begin position="211"/>
        <end position="220"/>
    </location>
</feature>
<feature type="compositionally biased region" description="Polar residues" evidence="5">
    <location>
        <begin position="221"/>
        <end position="241"/>
    </location>
</feature>
<feature type="compositionally biased region" description="Low complexity" evidence="5">
    <location>
        <begin position="242"/>
        <end position="253"/>
    </location>
</feature>
<feature type="modified residue" description="Phosphoserine" evidence="1">
    <location>
        <position position="211"/>
    </location>
</feature>
<feature type="modified residue" description="Phosphoserine" evidence="2">
    <location>
        <position position="215"/>
    </location>
</feature>
<feature type="modified residue" description="Phosphoserine" evidence="2">
    <location>
        <position position="220"/>
    </location>
</feature>
<feature type="modified residue" description="Phosphoserine" evidence="2">
    <location>
        <position position="227"/>
    </location>
</feature>
<feature type="modified residue" description="Phosphoserine" evidence="2">
    <location>
        <position position="231"/>
    </location>
</feature>
<feature type="modified residue" description="4-hydroxyproline" evidence="2">
    <location>
        <position position="232"/>
    </location>
</feature>
<feature type="modified residue" description="Phosphoserine" evidence="2">
    <location>
        <position position="242"/>
    </location>
</feature>
<feature type="modified residue" description="Phosphoserine" evidence="2">
    <location>
        <position position="245"/>
    </location>
</feature>
<feature type="modified residue" description="N6-acetyllysine" evidence="1">
    <location>
        <position position="308"/>
    </location>
</feature>
<feature type="cross-link" description="Glycyl lysine isopeptide (Lys-Gly) (interchain with G-Cter in SUMO2)" evidence="1">
    <location>
        <position position="53"/>
    </location>
</feature>
<feature type="cross-link" description="Glycyl lysine isopeptide (Lys-Gly) (interchain with G-Cter in SUMO2)" evidence="1">
    <location>
        <position position="256"/>
    </location>
</feature>
<feature type="cross-link" description="Glycyl lysine isopeptide (Lys-Gly) (interchain with G-Cter in SUMO2)" evidence="1">
    <location>
        <position position="264"/>
    </location>
</feature>
<feature type="cross-link" description="Glycyl lysine isopeptide (Lys-Gly) (interchain with G-Cter in SUMO2)" evidence="1">
    <location>
        <position position="269"/>
    </location>
</feature>
<organism>
    <name type="scientific">Bos taurus</name>
    <name type="common">Bovine</name>
    <dbReference type="NCBI Taxonomy" id="9913"/>
    <lineage>
        <taxon>Eukaryota</taxon>
        <taxon>Metazoa</taxon>
        <taxon>Chordata</taxon>
        <taxon>Craniata</taxon>
        <taxon>Vertebrata</taxon>
        <taxon>Euteleostomi</taxon>
        <taxon>Mammalia</taxon>
        <taxon>Eutheria</taxon>
        <taxon>Laurasiatheria</taxon>
        <taxon>Artiodactyla</taxon>
        <taxon>Ruminantia</taxon>
        <taxon>Pecora</taxon>
        <taxon>Bovidae</taxon>
        <taxon>Bovinae</taxon>
        <taxon>Bos</taxon>
    </lineage>
</organism>
<proteinExistence type="evidence at protein level"/>
<keyword id="KW-0007">Acetylation</keyword>
<keyword id="KW-0010">Activator</keyword>
<keyword id="KW-0090">Biological rhythms</keyword>
<keyword id="KW-1003">Cell membrane</keyword>
<keyword id="KW-0963">Cytoplasm</keyword>
<keyword id="KW-0206">Cytoskeleton</keyword>
<keyword id="KW-0238">DNA-binding</keyword>
<keyword id="KW-0379">Hydroxylation</keyword>
<keyword id="KW-1017">Isopeptide bond</keyword>
<keyword id="KW-0472">Membrane</keyword>
<keyword id="KW-0539">Nucleus</keyword>
<keyword id="KW-0597">Phosphoprotein</keyword>
<keyword id="KW-1185">Reference proteome</keyword>
<keyword id="KW-0678">Repressor</keyword>
<keyword id="KW-0804">Transcription</keyword>
<keyword id="KW-0805">Transcription regulation</keyword>
<keyword id="KW-0832">Ubl conjugation</keyword>
<name>ATF4_BOVIN</name>
<gene>
    <name evidence="7" type="primary">ATF4</name>
</gene>
<sequence>MAEMSFLSSEVLGGDFVSPFDQLGLGAEESLGLLDDNLEVAKHFKHHGFSCDKAKAGSSEWLAVDWLVSDNSKEDAFSGTDWMVEKMDLKEFDFDILFSKDDLETMPDELLATLDDTCDLFQPLVQETNKEPPQIVNPIGHLPEGLPTIDQGAPFTFFQPLPPSPGTLSSTPDHSFSLELCSEVVIPEGDSKPDSTTTGFPQCIKEEDAPSDNDSGICMSPDSSLGSPQDSPSTSRGSPNKSLLSPGALSGSSRPKPYDPPGEKMVAAKVKGEKLDKKLKKMEQNKTAATRYRQKKRAEQEALTGECKELEKKNEALKEKADSLAKEIQYLKDQIEEVRKAREKKRVL</sequence>